<reference key="1">
    <citation type="submission" date="2009-07" db="EMBL/GenBank/DDBJ databases">
        <title>The genome sequence of Mycobacterium tuberculosis strain KZN 1435.</title>
        <authorList>
            <person name="Murray M."/>
            <person name="Pillay M."/>
            <person name="Borowsky M.L."/>
            <person name="Young S.K."/>
            <person name="Zeng Q."/>
            <person name="Koehrsen M."/>
            <person name="Alvarado L."/>
            <person name="Berlin A.M."/>
            <person name="Borenstein D."/>
            <person name="Chen Z."/>
            <person name="Engels R."/>
            <person name="Freedman E."/>
            <person name="Gellesch M."/>
            <person name="Goldberg J."/>
            <person name="Griggs A."/>
            <person name="Gujja S."/>
            <person name="Heiman D.I."/>
            <person name="Hepburn T.A."/>
            <person name="Howarth C."/>
            <person name="Jen D."/>
            <person name="Larson L."/>
            <person name="Lewis B."/>
            <person name="Mehta T."/>
            <person name="Park D."/>
            <person name="Pearson M."/>
            <person name="Roberts A."/>
            <person name="Saif S."/>
            <person name="Shea T.D."/>
            <person name="Shenoy N."/>
            <person name="Sisk P."/>
            <person name="Stolte C."/>
            <person name="Sykes S.N."/>
            <person name="Walk T."/>
            <person name="White J."/>
            <person name="Yandava C."/>
            <person name="Haas B."/>
            <person name="Nusbaum C."/>
            <person name="Galagan J."/>
            <person name="Birren B."/>
        </authorList>
    </citation>
    <scope>NUCLEOTIDE SEQUENCE [LARGE SCALE GENOMIC DNA]</scope>
    <source>
        <strain>KZN 1435 / MDR</strain>
    </source>
</reference>
<proteinExistence type="inferred from homology"/>
<name>PSB_MYCTK</name>
<feature type="propeptide" id="PRO_0000397550" description="Removed in mature form; by autocatalysis" evidence="1">
    <location>
        <begin position="1"/>
        <end position="57"/>
    </location>
</feature>
<feature type="chain" id="PRO_0000397551" description="Proteasome subunit beta">
    <location>
        <begin position="58"/>
        <end position="291"/>
    </location>
</feature>
<feature type="active site" description="Nucleophile" evidence="1">
    <location>
        <position position="58"/>
    </location>
</feature>
<keyword id="KW-0068">Autocatalytic cleavage</keyword>
<keyword id="KW-0963">Cytoplasm</keyword>
<keyword id="KW-0378">Hydrolase</keyword>
<keyword id="KW-0645">Protease</keyword>
<keyword id="KW-0647">Proteasome</keyword>
<keyword id="KW-0888">Threonine protease</keyword>
<keyword id="KW-0865">Zymogen</keyword>
<dbReference type="EC" id="3.4.25.1" evidence="1"/>
<dbReference type="EMBL" id="CP001658">
    <property type="protein sequence ID" value="ACT24934.1"/>
    <property type="molecule type" value="Genomic_DNA"/>
</dbReference>
<dbReference type="RefSeq" id="WP_003411023.1">
    <property type="nucleotide sequence ID" value="NZ_KK341220.1"/>
</dbReference>
<dbReference type="SMR" id="C6DPV1"/>
<dbReference type="MEROPS" id="T01.005"/>
<dbReference type="KEGG" id="mtb:TBMG_01870"/>
<dbReference type="PATRIC" id="fig|478434.13.peg.2249"/>
<dbReference type="HOGENOM" id="CLU_035750_2_0_11"/>
<dbReference type="UniPathway" id="UPA00997"/>
<dbReference type="GO" id="GO:0005737">
    <property type="term" value="C:cytoplasm"/>
    <property type="evidence" value="ECO:0007669"/>
    <property type="project" value="UniProtKB-SubCell"/>
</dbReference>
<dbReference type="GO" id="GO:0019774">
    <property type="term" value="C:proteasome core complex, beta-subunit complex"/>
    <property type="evidence" value="ECO:0007669"/>
    <property type="project" value="UniProtKB-UniRule"/>
</dbReference>
<dbReference type="GO" id="GO:0004298">
    <property type="term" value="F:threonine-type endopeptidase activity"/>
    <property type="evidence" value="ECO:0007669"/>
    <property type="project" value="UniProtKB-UniRule"/>
</dbReference>
<dbReference type="GO" id="GO:0019941">
    <property type="term" value="P:modification-dependent protein catabolic process"/>
    <property type="evidence" value="ECO:0007669"/>
    <property type="project" value="UniProtKB-UniRule"/>
</dbReference>
<dbReference type="GO" id="GO:0010498">
    <property type="term" value="P:proteasomal protein catabolic process"/>
    <property type="evidence" value="ECO:0007669"/>
    <property type="project" value="UniProtKB-UniRule"/>
</dbReference>
<dbReference type="CDD" id="cd01906">
    <property type="entry name" value="proteasome_protease_HslV"/>
    <property type="match status" value="1"/>
</dbReference>
<dbReference type="FunFam" id="3.60.20.10:FF:000046">
    <property type="entry name" value="Proteasome subunit beta"/>
    <property type="match status" value="1"/>
</dbReference>
<dbReference type="Gene3D" id="3.60.20.10">
    <property type="entry name" value="Glutamine Phosphoribosylpyrophosphate, subunit 1, domain 1"/>
    <property type="match status" value="1"/>
</dbReference>
<dbReference type="HAMAP" id="MF_02113_B">
    <property type="entry name" value="Proteasome_B_B"/>
    <property type="match status" value="1"/>
</dbReference>
<dbReference type="InterPro" id="IPR029055">
    <property type="entry name" value="Ntn_hydrolases_N"/>
</dbReference>
<dbReference type="InterPro" id="IPR001353">
    <property type="entry name" value="Proteasome_sua/b"/>
</dbReference>
<dbReference type="InterPro" id="IPR023333">
    <property type="entry name" value="Proteasome_suB-type"/>
</dbReference>
<dbReference type="InterPro" id="IPR022483">
    <property type="entry name" value="PSB_actinobac"/>
</dbReference>
<dbReference type="NCBIfam" id="TIGR03690">
    <property type="entry name" value="20S_bact_beta"/>
    <property type="match status" value="1"/>
</dbReference>
<dbReference type="PANTHER" id="PTHR32194:SF0">
    <property type="entry name" value="ATP-DEPENDENT PROTEASE SUBUNIT HSLV"/>
    <property type="match status" value="1"/>
</dbReference>
<dbReference type="PANTHER" id="PTHR32194">
    <property type="entry name" value="METALLOPROTEASE TLDD"/>
    <property type="match status" value="1"/>
</dbReference>
<dbReference type="Pfam" id="PF00227">
    <property type="entry name" value="Proteasome"/>
    <property type="match status" value="1"/>
</dbReference>
<dbReference type="SUPFAM" id="SSF56235">
    <property type="entry name" value="N-terminal nucleophile aminohydrolases (Ntn hydrolases)"/>
    <property type="match status" value="1"/>
</dbReference>
<dbReference type="PROSITE" id="PS51476">
    <property type="entry name" value="PROTEASOME_BETA_2"/>
    <property type="match status" value="1"/>
</dbReference>
<accession>C6DPV1</accession>
<organism>
    <name type="scientific">Mycobacterium tuberculosis (strain KZN 1435 / MDR)</name>
    <dbReference type="NCBI Taxonomy" id="478434"/>
    <lineage>
        <taxon>Bacteria</taxon>
        <taxon>Bacillati</taxon>
        <taxon>Actinomycetota</taxon>
        <taxon>Actinomycetes</taxon>
        <taxon>Mycobacteriales</taxon>
        <taxon>Mycobacteriaceae</taxon>
        <taxon>Mycobacterium</taxon>
        <taxon>Mycobacterium tuberculosis complex</taxon>
    </lineage>
</organism>
<protein>
    <recommendedName>
        <fullName evidence="1">Proteasome subunit beta</fullName>
        <ecNumber evidence="1">3.4.25.1</ecNumber>
    </recommendedName>
    <alternativeName>
        <fullName evidence="1">20S proteasome beta subunit</fullName>
    </alternativeName>
    <alternativeName>
        <fullName evidence="1">Proteasome core protein PrcB</fullName>
    </alternativeName>
</protein>
<comment type="function">
    <text evidence="1">Component of the proteasome core, a large protease complex with broad specificity involved in protein degradation.</text>
</comment>
<comment type="catalytic activity">
    <reaction evidence="1">
        <text>Cleavage of peptide bonds with very broad specificity.</text>
        <dbReference type="EC" id="3.4.25.1"/>
    </reaction>
</comment>
<comment type="activity regulation">
    <text evidence="1">The formation of the proteasomal ATPase ARC-20S proteasome complex, likely via the docking of the C-termini of ARC into the intersubunit pockets in the alpha-rings, may trigger opening of the gate for substrate entry. Interconversion between the open-gate and close-gate conformations leads to a dynamic regulation of the 20S proteasome proteolysis activity.</text>
</comment>
<comment type="pathway">
    <text evidence="1">Protein degradation; proteasomal Pup-dependent pathway.</text>
</comment>
<comment type="subunit">
    <text evidence="1">The 20S proteasome core is composed of 14 alpha and 14 beta subunits that assemble into four stacked heptameric rings, resulting in a barrel-shaped structure. The two inner rings, each composed of seven catalytic beta subunits, are sandwiched by two outer rings, each composed of seven alpha subunits. The catalytic chamber with the active sites is on the inside of the barrel. Has a gated structure, the ends of the cylinder being occluded by the N-termini of the alpha-subunits. Is capped by the proteasome-associated ATPase, ARC.</text>
</comment>
<comment type="subcellular location">
    <subcellularLocation>
        <location evidence="1">Cytoplasm</location>
    </subcellularLocation>
</comment>
<comment type="similarity">
    <text evidence="1">Belongs to the peptidase T1B family.</text>
</comment>
<evidence type="ECO:0000255" key="1">
    <source>
        <dbReference type="HAMAP-Rule" id="MF_02113"/>
    </source>
</evidence>
<gene>
    <name evidence="1" type="primary">prcB</name>
    <name type="ordered locus">TBMG_01870</name>
</gene>
<sequence>MTWPLPDRLSINSLSGTPAVDLSSFTDFLRRQAPELLPASISGGAPLAGGDAQLPHGTTIVALKYPGGVVMAGDRRSTQGNMISGRDVRKVYITDDYTATGIAGTAAVAVEFARLYAVELEHYEKLEGVPLTFAGKINRLAIMVRGNLAAAMQGLLALPLLAGYDIHASDPQSAGRIVSFDAAGGWNIEEEGYQAVGSGSLFAKSSMKKLYSQVTDGDSGLRVAVEALYDAADDDSATGGPDLVRGIFPTAVIIDADGAVDVPESRIAELARAIIESRSGADTFGSDGGEK</sequence>